<sequence length="529" mass="58620">MMKNSCRLLLILIGLWMANVSLAQKTFRNPIITGMNPDPSICRVGDDFYLVTSTFEYFPGLPVYHSKDLVHWKLIGHALSRPENNPLMGCNASTGGQYAPTLRYHDGTFYVIGTNYGGKGSQGVFYVTAKNPAGPWSDPVWVGNWYVDPSIEFIDGKMYFLSPDNQGSFLLGVMDPETGTFVEALRKVASGLGGSSPEGPHFYKIGDYYYIMSAEGGTGYEHREVIQRSKSPWGPYEPSPVNPVLSNMNCPDHPFQAIGHADLVQLKDGSWWAVCLGIRPVNGKYQHLGRETFLAPVTWDADGWPKVGKDGVVQETYLFPNLPSHVWMEQPVRDDFDQETLGLDWTFIRNPAHSFWSLTEKPGSLRLKGTAINFTTNDSPSFIGRRQAAFNLTASAKVNFIPKVENEEAGLVVRADDKNHYDLLITERNGQRVAMIRKTLKDKVVDTTCKELPATGEVILSITATETTYTFEIKAAHVSAILGTASTRDVSNEVVGGFTGVFIGMYASGNGQANTNPADFDWFDFRCLD</sequence>
<accession>A7LXU0</accession>
<dbReference type="EC" id="3.2.1.55"/>
<dbReference type="EMBL" id="AAXF02000049">
    <property type="protein sequence ID" value="EDO11447.1"/>
    <property type="status" value="ALT_INIT"/>
    <property type="molecule type" value="Genomic_DNA"/>
</dbReference>
<dbReference type="RefSeq" id="WP_052587925.1">
    <property type="nucleotide sequence ID" value="NZ_DS264579.1"/>
</dbReference>
<dbReference type="PDB" id="5JOZ">
    <property type="method" value="X-ray"/>
    <property type="resolution" value="2.28 A"/>
    <property type="chains" value="A/B=24-529"/>
</dbReference>
<dbReference type="PDBsum" id="5JOZ"/>
<dbReference type="SMR" id="A7LXU0"/>
<dbReference type="eggNOG" id="COG3507">
    <property type="taxonomic scope" value="Bacteria"/>
</dbReference>
<dbReference type="HOGENOM" id="CLU_016508_2_0_10"/>
<dbReference type="SABIO-RK" id="A7LXU0"/>
<dbReference type="UniPathway" id="UPA01045"/>
<dbReference type="Proteomes" id="UP000005475">
    <property type="component" value="Unassembled WGS sequence"/>
</dbReference>
<dbReference type="GO" id="GO:0042597">
    <property type="term" value="C:periplasmic space"/>
    <property type="evidence" value="ECO:0007669"/>
    <property type="project" value="UniProtKB-SubCell"/>
</dbReference>
<dbReference type="GO" id="GO:0046556">
    <property type="term" value="F:alpha-L-arabinofuranosidase activity"/>
    <property type="evidence" value="ECO:0000314"/>
    <property type="project" value="UniProtKB"/>
</dbReference>
<dbReference type="GO" id="GO:0085030">
    <property type="term" value="P:symbiotic process benefiting host"/>
    <property type="evidence" value="ECO:0000314"/>
    <property type="project" value="UniProtKB"/>
</dbReference>
<dbReference type="GO" id="GO:2000899">
    <property type="term" value="P:xyloglucan catabolic process"/>
    <property type="evidence" value="ECO:0000314"/>
    <property type="project" value="UniProtKB"/>
</dbReference>
<dbReference type="CDD" id="cd18617">
    <property type="entry name" value="GH43_XynB-like"/>
    <property type="match status" value="1"/>
</dbReference>
<dbReference type="FunFam" id="2.115.10.20:FF:000013">
    <property type="entry name" value="Non-reducing end alpha-L-arabinofuranosidase BoGH43A"/>
    <property type="match status" value="1"/>
</dbReference>
<dbReference type="FunFam" id="2.60.120.200:FF:000362">
    <property type="entry name" value="Non-reducing end alpha-L-arabinofuranosidase BoGH43A"/>
    <property type="match status" value="1"/>
</dbReference>
<dbReference type="Gene3D" id="2.60.120.200">
    <property type="match status" value="1"/>
</dbReference>
<dbReference type="Gene3D" id="2.115.10.20">
    <property type="entry name" value="Glycosyl hydrolase domain, family 43"/>
    <property type="match status" value="1"/>
</dbReference>
<dbReference type="InterPro" id="IPR013320">
    <property type="entry name" value="ConA-like_dom_sf"/>
</dbReference>
<dbReference type="InterPro" id="IPR041542">
    <property type="entry name" value="GH43_C2"/>
</dbReference>
<dbReference type="InterPro" id="IPR006710">
    <property type="entry name" value="Glyco_hydro_43"/>
</dbReference>
<dbReference type="InterPro" id="IPR023296">
    <property type="entry name" value="Glyco_hydro_beta-prop_sf"/>
</dbReference>
<dbReference type="InterPro" id="IPR051795">
    <property type="entry name" value="Glycosyl_Hydrlase_43"/>
</dbReference>
<dbReference type="PANTHER" id="PTHR42812">
    <property type="entry name" value="BETA-XYLOSIDASE"/>
    <property type="match status" value="1"/>
</dbReference>
<dbReference type="PANTHER" id="PTHR42812:SF12">
    <property type="entry name" value="BETA-XYLOSIDASE-RELATED"/>
    <property type="match status" value="1"/>
</dbReference>
<dbReference type="Pfam" id="PF17851">
    <property type="entry name" value="GH43_C2"/>
    <property type="match status" value="1"/>
</dbReference>
<dbReference type="Pfam" id="PF04616">
    <property type="entry name" value="Glyco_hydro_43"/>
    <property type="match status" value="1"/>
</dbReference>
<dbReference type="SUPFAM" id="SSF75005">
    <property type="entry name" value="Arabinanase/levansucrase/invertase"/>
    <property type="match status" value="1"/>
</dbReference>
<dbReference type="SUPFAM" id="SSF49899">
    <property type="entry name" value="Concanavalin A-like lectins/glucanases"/>
    <property type="match status" value="1"/>
</dbReference>
<protein>
    <recommendedName>
        <fullName>Non-reducing end alpha-L-arabinofuranosidase BoGH43B</fullName>
        <ecNumber>3.2.1.55</ecNumber>
    </recommendedName>
    <alternativeName>
        <fullName>Glycosyl hydrolase family protein 43B</fullName>
        <shortName>BoGH43B</shortName>
    </alternativeName>
</protein>
<reference key="1">
    <citation type="submission" date="2007-04" db="EMBL/GenBank/DDBJ databases">
        <title>Draft genome sequence of Bacteroides ovatus (ATCC 8483).</title>
        <authorList>
            <person name="Sudarsanam P."/>
            <person name="Ley R."/>
            <person name="Guruge J."/>
            <person name="Turnbaugh P.J."/>
            <person name="Mahowald M."/>
            <person name="Liep D."/>
            <person name="Gordon J."/>
        </authorList>
    </citation>
    <scope>NUCLEOTIDE SEQUENCE [LARGE SCALE GENOMIC DNA]</scope>
    <source>
        <strain>ATCC 8483 / DSM 1896 / JCM 5824 / BCRC 10623 / CCUG 4943 / NCTC 11153</strain>
    </source>
</reference>
<reference key="2">
    <citation type="journal article" date="2014" name="Nature">
        <title>A discrete genetic locus confers xyloglucan metabolism in select human gut Bacteroidetes.</title>
        <authorList>
            <person name="Larsbrink J."/>
            <person name="Rogers T.E."/>
            <person name="Hemsworth G.R."/>
            <person name="McKee L.S."/>
            <person name="Tauzin A.S."/>
            <person name="Spadiut O."/>
            <person name="Klinter S."/>
            <person name="Pudlo N.A."/>
            <person name="Urs K."/>
            <person name="Koropatkin N.M."/>
            <person name="Creagh A.L."/>
            <person name="Haynes C.A."/>
            <person name="Kelly A.G."/>
            <person name="Cederholm S.N."/>
            <person name="Davies G.J."/>
            <person name="Martens E.C."/>
            <person name="Brumer H."/>
        </authorList>
    </citation>
    <scope>FUNCTION</scope>
    <scope>CATALYTIC ACTIVITY</scope>
    <scope>BIOPHYSICOCHEMICAL PROPERTIES</scope>
    <scope>PATHWAY</scope>
</reference>
<reference key="3">
    <citation type="journal article" date="2016" name="Open Biol.">
        <title>Structural dissection of a complex Bacteroides ovatus gene locus conferring xyloglucan metabolism in the human gut.</title>
        <authorList>
            <person name="Hemsworth G.R."/>
            <person name="Thompson A.J."/>
            <person name="Stepper J."/>
            <person name="Sobala L.F."/>
            <person name="Coyle T."/>
            <person name="Larsbrink J."/>
            <person name="Spadiut O."/>
            <person name="Goddard-Borger E.D."/>
            <person name="Stubbs K.A."/>
            <person name="Brumer H."/>
            <person name="Davies G.J."/>
        </authorList>
    </citation>
    <scope>X-RAY CRYSTALLOGRAPHY (2.28 ANGSTROMS)</scope>
</reference>
<organism>
    <name type="scientific">Bacteroides ovatus (strain ATCC 8483 / DSM 1896 / JCM 5824 / BCRC 10623 / CCUG 4943 / NCTC 11153)</name>
    <dbReference type="NCBI Taxonomy" id="411476"/>
    <lineage>
        <taxon>Bacteria</taxon>
        <taxon>Pseudomonadati</taxon>
        <taxon>Bacteroidota</taxon>
        <taxon>Bacteroidia</taxon>
        <taxon>Bacteroidales</taxon>
        <taxon>Bacteroidaceae</taxon>
        <taxon>Bacteroides</taxon>
    </lineage>
</organism>
<name>GH43B_BACO1</name>
<evidence type="ECO:0000255" key="1"/>
<evidence type="ECO:0000269" key="2">
    <source>
    </source>
</evidence>
<evidence type="ECO:0000305" key="3"/>
<evidence type="ECO:0000305" key="4">
    <source>
    </source>
</evidence>
<evidence type="ECO:0000305" key="5">
    <source>
    </source>
</evidence>
<evidence type="ECO:0007829" key="6">
    <source>
        <dbReference type="PDB" id="5JOZ"/>
    </source>
</evidence>
<proteinExistence type="evidence at protein level"/>
<comment type="function">
    <text evidence="2">Alpha-L-arabinofuranosidase involved in xyloglucan degradation by mediating the cleavage of terminal non-reducing alpha-L-arabinofuranoside residues in xyloglucan branches, converting the 'S' units to 'X' units.</text>
</comment>
<comment type="catalytic activity">
    <reaction evidence="2">
        <text>Hydrolysis of terminal non-reducing alpha-L-arabinofuranoside residues in alpha-L-arabinosides.</text>
        <dbReference type="EC" id="3.2.1.55"/>
    </reaction>
</comment>
<comment type="biophysicochemical properties">
    <kinetics>
        <KM evidence="2">6.6 mM for L- Araf-alpha-PNP</KM>
        <text>kcat is 0.0005 sec(-1) for L- Araf-alpha-PNP.</text>
    </kinetics>
    <phDependence>
        <text evidence="2">Optimum pH is 6.0-7.0.</text>
    </phDependence>
</comment>
<comment type="pathway">
    <text evidence="2">Glucan metabolism; xyloglucan degradation.</text>
</comment>
<comment type="subcellular location">
    <subcellularLocation>
        <location evidence="3">Periplasm</location>
    </subcellularLocation>
    <text evidence="2">Periplasmic localization is predicted by analogy with the archetypal sus locus.</text>
</comment>
<comment type="miscellaneous">
    <text evidence="4">Gut bacteria supply the human body with energy from dietary polysaccharides through glycosidases that are absent in the human genome. Xyloglucans are a ubiquitous family of highly branched plant cell wall polysaccharides present in the vegetables we consume. Enzymes involved in xyloglucan degradation mediate the conversion of otherwise indigestible plant polysaccharides to short-chain fatty acids (PubMed:24463512).</text>
</comment>
<comment type="similarity">
    <text evidence="3">Belongs to the glycosyl hydrolase 43 family.</text>
</comment>
<comment type="sequence caution" evidence="3">
    <conflict type="erroneous initiation">
        <sequence resource="EMBL-CDS" id="EDO11447"/>
    </conflict>
    <text>Truncated N-terminus.</text>
</comment>
<feature type="signal peptide" evidence="1">
    <location>
        <begin position="1"/>
        <end position="23"/>
    </location>
</feature>
<feature type="chain" id="PRO_0000425898" description="Non-reducing end alpha-L-arabinofuranosidase BoGH43B">
    <location>
        <begin position="24"/>
        <end position="529"/>
    </location>
</feature>
<feature type="active site" description="Proton acceptor" evidence="5">
    <location>
        <position position="38"/>
    </location>
</feature>
<feature type="active site" description="Proton donor" evidence="5">
    <location>
        <position position="198"/>
    </location>
</feature>
<feature type="site" description="Important for catalytic activity, responsible for pKa modulation of the active site Glu and correct orientation of both the proton donor and substrate" evidence="5">
    <location>
        <position position="148"/>
    </location>
</feature>
<feature type="strand" evidence="6">
    <location>
        <begin position="26"/>
        <end position="29"/>
    </location>
</feature>
<feature type="strand" evidence="6">
    <location>
        <begin position="40"/>
        <end position="44"/>
    </location>
</feature>
<feature type="strand" evidence="6">
    <location>
        <begin position="47"/>
        <end position="51"/>
    </location>
</feature>
<feature type="strand" evidence="6">
    <location>
        <begin position="57"/>
        <end position="71"/>
    </location>
</feature>
<feature type="strand" evidence="6">
    <location>
        <begin position="73"/>
        <end position="79"/>
    </location>
</feature>
<feature type="turn" evidence="6">
    <location>
        <begin position="82"/>
        <end position="84"/>
    </location>
</feature>
<feature type="turn" evidence="6">
    <location>
        <begin position="92"/>
        <end position="94"/>
    </location>
</feature>
<feature type="strand" evidence="6">
    <location>
        <begin position="95"/>
        <end position="97"/>
    </location>
</feature>
<feature type="strand" evidence="6">
    <location>
        <begin position="101"/>
        <end position="105"/>
    </location>
</feature>
<feature type="strand" evidence="6">
    <location>
        <begin position="108"/>
        <end position="117"/>
    </location>
</feature>
<feature type="strand" evidence="6">
    <location>
        <begin position="123"/>
        <end position="131"/>
    </location>
</feature>
<feature type="strand" evidence="6">
    <location>
        <begin position="150"/>
        <end position="154"/>
    </location>
</feature>
<feature type="strand" evidence="6">
    <location>
        <begin position="157"/>
        <end position="163"/>
    </location>
</feature>
<feature type="strand" evidence="6">
    <location>
        <begin position="165"/>
        <end position="174"/>
    </location>
</feature>
<feature type="turn" evidence="6">
    <location>
        <begin position="176"/>
        <end position="178"/>
    </location>
</feature>
<feature type="strand" evidence="6">
    <location>
        <begin position="181"/>
        <end position="190"/>
    </location>
</feature>
<feature type="strand" evidence="6">
    <location>
        <begin position="193"/>
        <end position="196"/>
    </location>
</feature>
<feature type="strand" evidence="6">
    <location>
        <begin position="198"/>
        <end position="205"/>
    </location>
</feature>
<feature type="strand" evidence="6">
    <location>
        <begin position="208"/>
        <end position="216"/>
    </location>
</feature>
<feature type="strand" evidence="6">
    <location>
        <begin position="223"/>
        <end position="231"/>
    </location>
</feature>
<feature type="strand" evidence="6">
    <location>
        <begin position="256"/>
        <end position="265"/>
    </location>
</feature>
<feature type="strand" evidence="6">
    <location>
        <begin position="271"/>
        <end position="278"/>
    </location>
</feature>
<feature type="turn" evidence="6">
    <location>
        <begin position="282"/>
        <end position="284"/>
    </location>
</feature>
<feature type="strand" evidence="6">
    <location>
        <begin position="291"/>
        <end position="299"/>
    </location>
</feature>
<feature type="strand" evidence="6">
    <location>
        <begin position="305"/>
        <end position="307"/>
    </location>
</feature>
<feature type="turn" evidence="6">
    <location>
        <begin position="308"/>
        <end position="310"/>
    </location>
</feature>
<feature type="strand" evidence="6">
    <location>
        <begin position="315"/>
        <end position="318"/>
    </location>
</feature>
<feature type="strand" evidence="6">
    <location>
        <begin position="332"/>
        <end position="334"/>
    </location>
</feature>
<feature type="strand" evidence="6">
    <location>
        <begin position="338"/>
        <end position="340"/>
    </location>
</feature>
<feature type="strand" evidence="6">
    <location>
        <begin position="346"/>
        <end position="350"/>
    </location>
</feature>
<feature type="helix" evidence="6">
    <location>
        <begin position="353"/>
        <end position="355"/>
    </location>
</feature>
<feature type="strand" evidence="6">
    <location>
        <begin position="356"/>
        <end position="361"/>
    </location>
</feature>
<feature type="strand" evidence="6">
    <location>
        <begin position="364"/>
        <end position="367"/>
    </location>
</feature>
<feature type="strand" evidence="6">
    <location>
        <begin position="376"/>
        <end position="378"/>
    </location>
</feature>
<feature type="strand" evidence="6">
    <location>
        <begin position="381"/>
        <end position="386"/>
    </location>
</feature>
<feature type="strand" evidence="6">
    <location>
        <begin position="390"/>
        <end position="399"/>
    </location>
</feature>
<feature type="strand" evidence="6">
    <location>
        <begin position="408"/>
        <end position="416"/>
    </location>
</feature>
<feature type="strand" evidence="6">
    <location>
        <begin position="419"/>
        <end position="428"/>
    </location>
</feature>
<feature type="strand" evidence="6">
    <location>
        <begin position="431"/>
        <end position="440"/>
    </location>
</feature>
<feature type="strand" evidence="6">
    <location>
        <begin position="443"/>
        <end position="451"/>
    </location>
</feature>
<feature type="strand" evidence="6">
    <location>
        <begin position="454"/>
        <end position="456"/>
    </location>
</feature>
<feature type="strand" evidence="6">
    <location>
        <begin position="458"/>
        <end position="464"/>
    </location>
</feature>
<feature type="strand" evidence="6">
    <location>
        <begin position="466"/>
        <end position="475"/>
    </location>
</feature>
<feature type="strand" evidence="6">
    <location>
        <begin position="478"/>
        <end position="487"/>
    </location>
</feature>
<feature type="helix" evidence="6">
    <location>
        <begin position="488"/>
        <end position="490"/>
    </location>
</feature>
<feature type="helix" evidence="6">
    <location>
        <begin position="492"/>
        <end position="495"/>
    </location>
</feature>
<feature type="strand" evidence="6">
    <location>
        <begin position="502"/>
        <end position="508"/>
    </location>
</feature>
<feature type="strand" evidence="6">
    <location>
        <begin position="518"/>
        <end position="527"/>
    </location>
</feature>
<keyword id="KW-0002">3D-structure</keyword>
<keyword id="KW-0119">Carbohydrate metabolism</keyword>
<keyword id="KW-0326">Glycosidase</keyword>
<keyword id="KW-0378">Hydrolase</keyword>
<keyword id="KW-0574">Periplasm</keyword>
<keyword id="KW-0624">Polysaccharide degradation</keyword>
<keyword id="KW-0732">Signal</keyword>
<gene>
    <name type="ORF">BACOVA_02656</name>
</gene>